<keyword id="KW-0378">Hydrolase</keyword>
<keyword id="KW-0441">Lipid A biosynthesis</keyword>
<keyword id="KW-0444">Lipid biosynthesis</keyword>
<keyword id="KW-0443">Lipid metabolism</keyword>
<keyword id="KW-0479">Metal-binding</keyword>
<keyword id="KW-1185">Reference proteome</keyword>
<keyword id="KW-0862">Zinc</keyword>
<organism>
    <name type="scientific">Neisseria meningitidis serogroup B (strain ATCC BAA-335 / MC58)</name>
    <dbReference type="NCBI Taxonomy" id="122586"/>
    <lineage>
        <taxon>Bacteria</taxon>
        <taxon>Pseudomonadati</taxon>
        <taxon>Pseudomonadota</taxon>
        <taxon>Betaproteobacteria</taxon>
        <taxon>Neisseriales</taxon>
        <taxon>Neisseriaceae</taxon>
        <taxon>Neisseria</taxon>
    </lineage>
</organism>
<proteinExistence type="inferred from homology"/>
<dbReference type="EC" id="3.5.1.108" evidence="1"/>
<dbReference type="EMBL" id="AE002098">
    <property type="protein sequence ID" value="AAF40496.1"/>
    <property type="molecule type" value="Genomic_DNA"/>
</dbReference>
<dbReference type="PIR" id="E81246">
    <property type="entry name" value="E81246"/>
</dbReference>
<dbReference type="RefSeq" id="NP_273083.1">
    <property type="nucleotide sequence ID" value="NC_003112.2"/>
</dbReference>
<dbReference type="RefSeq" id="WP_002216134.1">
    <property type="nucleotide sequence ID" value="NC_003112.2"/>
</dbReference>
<dbReference type="SMR" id="Q9K1Q3"/>
<dbReference type="FunCoup" id="Q9K1Q3">
    <property type="interactions" value="408"/>
</dbReference>
<dbReference type="STRING" id="122586.NMB0017"/>
<dbReference type="PaxDb" id="122586-NMB0017"/>
<dbReference type="KEGG" id="nme:NMB0017"/>
<dbReference type="PATRIC" id="fig|122586.8.peg.21"/>
<dbReference type="HOGENOM" id="CLU_046528_1_0_4"/>
<dbReference type="InParanoid" id="Q9K1Q3"/>
<dbReference type="OrthoDB" id="9802746at2"/>
<dbReference type="UniPathway" id="UPA00359">
    <property type="reaction ID" value="UER00478"/>
</dbReference>
<dbReference type="Proteomes" id="UP000000425">
    <property type="component" value="Chromosome"/>
</dbReference>
<dbReference type="GO" id="GO:0016020">
    <property type="term" value="C:membrane"/>
    <property type="evidence" value="ECO:0007669"/>
    <property type="project" value="GOC"/>
</dbReference>
<dbReference type="GO" id="GO:0046872">
    <property type="term" value="F:metal ion binding"/>
    <property type="evidence" value="ECO:0007669"/>
    <property type="project" value="UniProtKB-KW"/>
</dbReference>
<dbReference type="GO" id="GO:0103117">
    <property type="term" value="F:UDP-3-O-acyl-N-acetylglucosamine deacetylase activity"/>
    <property type="evidence" value="ECO:0007669"/>
    <property type="project" value="UniProtKB-UniRule"/>
</dbReference>
<dbReference type="GO" id="GO:0009245">
    <property type="term" value="P:lipid A biosynthetic process"/>
    <property type="evidence" value="ECO:0007669"/>
    <property type="project" value="UniProtKB-UniRule"/>
</dbReference>
<dbReference type="Gene3D" id="3.30.230.20">
    <property type="entry name" value="lpxc deacetylase, domain 1"/>
    <property type="match status" value="1"/>
</dbReference>
<dbReference type="Gene3D" id="3.30.1700.10">
    <property type="entry name" value="lpxc deacetylase, domain 2"/>
    <property type="match status" value="1"/>
</dbReference>
<dbReference type="HAMAP" id="MF_00388">
    <property type="entry name" value="LpxC"/>
    <property type="match status" value="1"/>
</dbReference>
<dbReference type="InterPro" id="IPR020568">
    <property type="entry name" value="Ribosomal_Su5_D2-typ_SF"/>
</dbReference>
<dbReference type="InterPro" id="IPR004463">
    <property type="entry name" value="UDP-acyl_GlcNac_deAcase"/>
</dbReference>
<dbReference type="InterPro" id="IPR011334">
    <property type="entry name" value="UDP-acyl_GlcNac_deAcase_C"/>
</dbReference>
<dbReference type="InterPro" id="IPR015870">
    <property type="entry name" value="UDP-acyl_N-AcGlcN_deAcase_N"/>
</dbReference>
<dbReference type="NCBIfam" id="TIGR00325">
    <property type="entry name" value="lpxC"/>
    <property type="match status" value="1"/>
</dbReference>
<dbReference type="PANTHER" id="PTHR33694">
    <property type="entry name" value="UDP-3-O-ACYL-N-ACETYLGLUCOSAMINE DEACETYLASE 1, MITOCHONDRIAL-RELATED"/>
    <property type="match status" value="1"/>
</dbReference>
<dbReference type="PANTHER" id="PTHR33694:SF1">
    <property type="entry name" value="UDP-3-O-ACYL-N-ACETYLGLUCOSAMINE DEACETYLASE 1, MITOCHONDRIAL-RELATED"/>
    <property type="match status" value="1"/>
</dbReference>
<dbReference type="Pfam" id="PF03331">
    <property type="entry name" value="LpxC"/>
    <property type="match status" value="1"/>
</dbReference>
<dbReference type="SUPFAM" id="SSF54211">
    <property type="entry name" value="Ribosomal protein S5 domain 2-like"/>
    <property type="match status" value="2"/>
</dbReference>
<accession>Q9K1Q3</accession>
<feature type="chain" id="PRO_0000191941" description="UDP-3-O-acyl-N-acetylglucosamine deacetylase">
    <location>
        <begin position="1"/>
        <end position="307"/>
    </location>
</feature>
<feature type="active site" description="Proton donor" evidence="1">
    <location>
        <position position="266"/>
    </location>
</feature>
<feature type="binding site" evidence="1">
    <location>
        <position position="80"/>
    </location>
    <ligand>
        <name>Zn(2+)</name>
        <dbReference type="ChEBI" id="CHEBI:29105"/>
    </ligand>
</feature>
<feature type="binding site" evidence="1">
    <location>
        <position position="239"/>
    </location>
    <ligand>
        <name>Zn(2+)</name>
        <dbReference type="ChEBI" id="CHEBI:29105"/>
    </ligand>
</feature>
<feature type="binding site" evidence="1">
    <location>
        <position position="243"/>
    </location>
    <ligand>
        <name>Zn(2+)</name>
        <dbReference type="ChEBI" id="CHEBI:29105"/>
    </ligand>
</feature>
<reference key="1">
    <citation type="journal article" date="2000" name="Science">
        <title>Complete genome sequence of Neisseria meningitidis serogroup B strain MC58.</title>
        <authorList>
            <person name="Tettelin H."/>
            <person name="Saunders N.J."/>
            <person name="Heidelberg J.F."/>
            <person name="Jeffries A.C."/>
            <person name="Nelson K.E."/>
            <person name="Eisen J.A."/>
            <person name="Ketchum K.A."/>
            <person name="Hood D.W."/>
            <person name="Peden J.F."/>
            <person name="Dodson R.J."/>
            <person name="Nelson W.C."/>
            <person name="Gwinn M.L."/>
            <person name="DeBoy R.T."/>
            <person name="Peterson J.D."/>
            <person name="Hickey E.K."/>
            <person name="Haft D.H."/>
            <person name="Salzberg S.L."/>
            <person name="White O."/>
            <person name="Fleischmann R.D."/>
            <person name="Dougherty B.A."/>
            <person name="Mason T.M."/>
            <person name="Ciecko A."/>
            <person name="Parksey D.S."/>
            <person name="Blair E."/>
            <person name="Cittone H."/>
            <person name="Clark E.B."/>
            <person name="Cotton M.D."/>
            <person name="Utterback T.R."/>
            <person name="Khouri H.M."/>
            <person name="Qin H."/>
            <person name="Vamathevan J.J."/>
            <person name="Gill J."/>
            <person name="Scarlato V."/>
            <person name="Masignani V."/>
            <person name="Pizza M."/>
            <person name="Grandi G."/>
            <person name="Sun L."/>
            <person name="Smith H.O."/>
            <person name="Fraser C.M."/>
            <person name="Moxon E.R."/>
            <person name="Rappuoli R."/>
            <person name="Venter J.C."/>
        </authorList>
    </citation>
    <scope>NUCLEOTIDE SEQUENCE [LARGE SCALE GENOMIC DNA]</scope>
    <source>
        <strain>ATCC BAA-335 / MC58</strain>
    </source>
</reference>
<gene>
    <name evidence="1" type="primary">lpxC</name>
    <name type="ordered locus">NMB0017</name>
</gene>
<evidence type="ECO:0000255" key="1">
    <source>
        <dbReference type="HAMAP-Rule" id="MF_00388"/>
    </source>
</evidence>
<sequence length="307" mass="33987">MLQRTLAKSISVTGVGLHSGERVALTLHPAPENSGISFRRTDLDGEMGEQIKLTPYLINDTRLSSTIVTDKGVRVGTIEHIMSALSAYGIDNALIELNAPEIPIMDGSSLPFIYLLQDAGVVDQKAQKRFLKILKPVEIKEAGKWVRFTPYDGFKVTLTIEFDHPVFNRSSPTFEIDFAGKSYIDEIARARTFGFMHEVEMMRAHNLGLGGNLNNAIVIDDTDVLNPEGLRYPDEFVRHKILDAIGDLYIVGHPIVGAFEGYKSGHAINNALLRAVLADETAYDRVEFADSDDLPDAFHELNIRTCG</sequence>
<protein>
    <recommendedName>
        <fullName evidence="1">UDP-3-O-acyl-N-acetylglucosamine deacetylase</fullName>
        <shortName evidence="1">UDP-3-O-acyl-GlcNAc deacetylase</shortName>
        <ecNumber evidence="1">3.5.1.108</ecNumber>
    </recommendedName>
    <alternativeName>
        <fullName evidence="1">UDP-3-O-[R-3-hydroxymyristoyl]-N-acetylglucosamine deacetylase</fullName>
    </alternativeName>
</protein>
<name>LPXC_NEIMB</name>
<comment type="function">
    <text evidence="1">Catalyzes the hydrolysis of UDP-3-O-myristoyl-N-acetylglucosamine to form UDP-3-O-myristoylglucosamine and acetate, the committed step in lipid A biosynthesis.</text>
</comment>
<comment type="catalytic activity">
    <reaction evidence="1">
        <text>a UDP-3-O-[(3R)-3-hydroxyacyl]-N-acetyl-alpha-D-glucosamine + H2O = a UDP-3-O-[(3R)-3-hydroxyacyl]-alpha-D-glucosamine + acetate</text>
        <dbReference type="Rhea" id="RHEA:67816"/>
        <dbReference type="ChEBI" id="CHEBI:15377"/>
        <dbReference type="ChEBI" id="CHEBI:30089"/>
        <dbReference type="ChEBI" id="CHEBI:137740"/>
        <dbReference type="ChEBI" id="CHEBI:173225"/>
        <dbReference type="EC" id="3.5.1.108"/>
    </reaction>
</comment>
<comment type="cofactor">
    <cofactor evidence="1">
        <name>Zn(2+)</name>
        <dbReference type="ChEBI" id="CHEBI:29105"/>
    </cofactor>
</comment>
<comment type="pathway">
    <text evidence="1">Glycolipid biosynthesis; lipid IV(A) biosynthesis; lipid IV(A) from (3R)-3-hydroxytetradecanoyl-[acyl-carrier-protein] and UDP-N-acetyl-alpha-D-glucosamine: step 2/6.</text>
</comment>
<comment type="similarity">
    <text evidence="1">Belongs to the LpxC family.</text>
</comment>